<name>B17_VACCC</name>
<organism>
    <name type="scientific">Vaccinia virus (strain Copenhagen)</name>
    <name type="common">VACV</name>
    <dbReference type="NCBI Taxonomy" id="10249"/>
    <lineage>
        <taxon>Viruses</taxon>
        <taxon>Varidnaviria</taxon>
        <taxon>Bamfordvirae</taxon>
        <taxon>Nucleocytoviricota</taxon>
        <taxon>Pokkesviricetes</taxon>
        <taxon>Chitovirales</taxon>
        <taxon>Poxviridae</taxon>
        <taxon>Chordopoxvirinae</taxon>
        <taxon>Orthopoxvirus</taxon>
        <taxon>Vaccinia virus</taxon>
    </lineage>
</organism>
<keyword id="KW-1185">Reference proteome</keyword>
<evidence type="ECO:0000305" key="1"/>
<proteinExistence type="inferred from homology"/>
<gene>
    <name type="ORF">B17L</name>
</gene>
<comment type="similarity">
    <text evidence="1">Belongs to the orthopoxvirus B17 protein family.</text>
</comment>
<organismHost>
    <name type="scientific">Homo sapiens</name>
    <name type="common">Human</name>
    <dbReference type="NCBI Taxonomy" id="9606"/>
</organismHost>
<feature type="chain" id="PRO_0000099369" description="Protein B17">
    <location>
        <begin position="1"/>
        <end position="340"/>
    </location>
</feature>
<sequence>MSRKFMQVYEYDREQYLDEFIEDRYNDSFITSPEYYSAEKYMCRYTTLNHNCVNVRRCALDSKLLHDIITNCKIYNNIELVRATKFVYYLDLIKCNWVSKVGDSVLYPVIFITHTSTRNLDKVSVKTYKGVKVKKLNRCADHAIVINPFVKFKLTLPNKTSHAKVLVTFCKLRTDITPVEAPLPGNVLVYTFPDINKRIPGYIHVNIEGCIDGMIYINSSKFACVLKLHRSMYRIPPFPIDICSCCSQYTNDDIEIPIHDLIKDVAIFKNKETVYYLKLNNKTIARFTYFNNIDTAITQEHEYVKIALGIVCKLMINNMHSIVGVNHSNTFVNCLLEDNV</sequence>
<dbReference type="EMBL" id="M35027">
    <property type="protein sequence ID" value="AAA48216.1"/>
    <property type="molecule type" value="Genomic_DNA"/>
</dbReference>
<dbReference type="PIR" id="G42527">
    <property type="entry name" value="G42527"/>
</dbReference>
<dbReference type="Proteomes" id="UP000008269">
    <property type="component" value="Segment"/>
</dbReference>
<dbReference type="InterPro" id="IPR009633">
    <property type="entry name" value="Vaccinia_virus_B17"/>
</dbReference>
<dbReference type="Pfam" id="PF06802">
    <property type="entry name" value="DUF1231"/>
    <property type="match status" value="1"/>
</dbReference>
<protein>
    <recommendedName>
        <fullName>Protein B17</fullName>
    </recommendedName>
</protein>
<accession>P21075</accession>
<reference key="1">
    <citation type="journal article" date="1990" name="Virology">
        <title>The complete DNA sequence of vaccinia virus.</title>
        <authorList>
            <person name="Goebel S.J."/>
            <person name="Johnson G.P."/>
            <person name="Perkus M.E."/>
            <person name="Davis S.W."/>
            <person name="Winslow J.P."/>
            <person name="Paoletti E."/>
        </authorList>
    </citation>
    <scope>NUCLEOTIDE SEQUENCE [LARGE SCALE GENOMIC DNA]</scope>
</reference>
<reference key="2">
    <citation type="journal article" date="1990" name="Virology">
        <title>Appendix to 'The complete DNA sequence of vaccinia virus'.</title>
        <authorList>
            <person name="Goebel S.J."/>
            <person name="Johnson G.P."/>
            <person name="Perkus M.E."/>
            <person name="Davis S.W."/>
            <person name="Winslow J.P."/>
            <person name="Paoletti E."/>
        </authorList>
    </citation>
    <scope>NUCLEOTIDE SEQUENCE [LARGE SCALE GENOMIC DNA]</scope>
</reference>